<sequence length="169" mass="18381">MKDAITSLIATYDVTGKYFDDNAVDTLNAYFSTASARIESVKIINANVSTIIKTAASALFDEQPELIAPGGNANTTRRYAACLRDIDYYLRYATYAIISADVDVLDERVLDGLKETYNSLGVSIAPTVRAIELLKNTSKELIKAAGISAVDFIDEPFDYMGKVLADSSL</sequence>
<organism>
    <name type="scientific">Cyanophora paradoxa</name>
    <dbReference type="NCBI Taxonomy" id="2762"/>
    <lineage>
        <taxon>Eukaryota</taxon>
        <taxon>Glaucocystophyceae</taxon>
        <taxon>Cyanophoraceae</taxon>
        <taxon>Cyanophora</taxon>
    </lineage>
</organism>
<proteinExistence type="inferred from homology"/>
<name>APCF_CYAPA</name>
<feature type="chain" id="PRO_0000199088" description="Allophycocyanin subunit beta-18">
    <location>
        <begin position="1"/>
        <end position="169"/>
    </location>
</feature>
<feature type="binding site" description="covalent" evidence="1">
    <location>
        <position position="82"/>
    </location>
    <ligand>
        <name>(2R,3E)-phycocyanobilin</name>
        <dbReference type="ChEBI" id="CHEBI:85275"/>
    </ligand>
</feature>
<feature type="modified residue" description="N4-methylasparagine" evidence="1">
    <location>
        <position position="72"/>
    </location>
</feature>
<dbReference type="EMBL" id="U30821">
    <property type="protein sequence ID" value="AAA81307.1"/>
    <property type="molecule type" value="Genomic_DNA"/>
</dbReference>
<dbReference type="PIR" id="T06964">
    <property type="entry name" value="T06964"/>
</dbReference>
<dbReference type="RefSeq" id="NP_043276.1">
    <property type="nucleotide sequence ID" value="NC_001675.1"/>
</dbReference>
<dbReference type="SMR" id="P48087"/>
<dbReference type="GeneID" id="801632"/>
<dbReference type="GO" id="GO:0033115">
    <property type="term" value="C:cyanelle thylakoid membrane"/>
    <property type="evidence" value="ECO:0007669"/>
    <property type="project" value="UniProtKB-SubCell"/>
</dbReference>
<dbReference type="GO" id="GO:0030089">
    <property type="term" value="C:phycobilisome"/>
    <property type="evidence" value="ECO:0007669"/>
    <property type="project" value="UniProtKB-KW"/>
</dbReference>
<dbReference type="GO" id="GO:0015979">
    <property type="term" value="P:photosynthesis"/>
    <property type="evidence" value="ECO:0007669"/>
    <property type="project" value="UniProtKB-KW"/>
</dbReference>
<dbReference type="CDD" id="cd12126">
    <property type="entry name" value="APC_beta"/>
    <property type="match status" value="1"/>
</dbReference>
<dbReference type="Gene3D" id="1.10.490.20">
    <property type="entry name" value="Phycocyanins"/>
    <property type="match status" value="1"/>
</dbReference>
<dbReference type="InterPro" id="IPR006245">
    <property type="entry name" value="Allophycocyanin_b"/>
</dbReference>
<dbReference type="InterPro" id="IPR009050">
    <property type="entry name" value="Globin-like_sf"/>
</dbReference>
<dbReference type="InterPro" id="IPR012128">
    <property type="entry name" value="Phycobilisome_asu/bsu"/>
</dbReference>
<dbReference type="InterPro" id="IPR038719">
    <property type="entry name" value="Phycobilisome_asu/bsu_sf"/>
</dbReference>
<dbReference type="NCBIfam" id="TIGR01337">
    <property type="entry name" value="apcB"/>
    <property type="match status" value="1"/>
</dbReference>
<dbReference type="PANTHER" id="PTHR34011:SF3">
    <property type="entry name" value="ALLOPHYCOCYANIN BETA CHAIN"/>
    <property type="match status" value="1"/>
</dbReference>
<dbReference type="PANTHER" id="PTHR34011">
    <property type="entry name" value="PHYCOBILISOME 32.1 KDA LINKER POLYPEPTIDE, PHYCOCYANIN-ASSOCIATED, ROD 2-RELATED"/>
    <property type="match status" value="1"/>
</dbReference>
<dbReference type="Pfam" id="PF00502">
    <property type="entry name" value="Phycobilisome"/>
    <property type="match status" value="1"/>
</dbReference>
<dbReference type="PIRSF" id="PIRSF000081">
    <property type="entry name" value="Phycocyanin"/>
    <property type="match status" value="1"/>
</dbReference>
<dbReference type="SUPFAM" id="SSF46458">
    <property type="entry name" value="Globin-like"/>
    <property type="match status" value="1"/>
</dbReference>
<protein>
    <recommendedName>
        <fullName>Allophycocyanin subunit beta-18</fullName>
        <shortName>Allophycocyanin subunit B18</shortName>
    </recommendedName>
</protein>
<evidence type="ECO:0000250" key="1"/>
<evidence type="ECO:0000305" key="2"/>
<gene>
    <name type="primary">apcF</name>
</gene>
<reference key="1">
    <citation type="journal article" date="1995" name="Plant Mol. Biol. Rep.">
        <title>Nucleotide sequence of the cyanelle DNA from Cyanophora paradoxa.</title>
        <authorList>
            <person name="Stirewalt V.L."/>
            <person name="Michalowski C.B."/>
            <person name="Loeffelhardt W."/>
            <person name="Bohnert H.J."/>
            <person name="Bryant D.A."/>
        </authorList>
    </citation>
    <scope>NUCLEOTIDE SEQUENCE [LARGE SCALE GENOMIC DNA]</scope>
    <source>
        <strain>UTEX LB 555 / Pringsheim</strain>
    </source>
</reference>
<reference key="2">
    <citation type="book" date="1997" name="Eukaryotism and symbiosis">
        <title>The complete sequence of the cyanelle genome of Cyanophora paradoxa: the genetic complexity of a primitive plastid.</title>
        <editorList>
            <person name="Schenk H.E.A."/>
            <person name="Herrmann R."/>
            <person name="Jeon K.W."/>
            <person name="Mueller N.E."/>
            <person name="Schwemmler W."/>
        </editorList>
        <authorList>
            <person name="Loeffelhardt W."/>
            <person name="Stirewalt V.L."/>
            <person name="Michalowski C.B."/>
            <person name="Annarella M."/>
            <person name="Farley J.Y."/>
            <person name="Schluchter W.M."/>
            <person name="Chung S."/>
            <person name="Newmann-Spallart C."/>
            <person name="Steiner J.M."/>
            <person name="Jakowitsch J."/>
            <person name="Bohnert H.J."/>
            <person name="Bryant D.A."/>
        </authorList>
    </citation>
    <scope>NUCLEOTIDE SEQUENCE [LARGE SCALE GENOMIC DNA]</scope>
    <source>
        <strain>UTEX LB 555 / Pringsheim</strain>
    </source>
</reference>
<keyword id="KW-0042">Antenna complex</keyword>
<keyword id="KW-0089">Bile pigment</keyword>
<keyword id="KW-0157">Chromophore</keyword>
<keyword id="KW-0194">Cyanelle</keyword>
<keyword id="KW-0249">Electron transport</keyword>
<keyword id="KW-0472">Membrane</keyword>
<keyword id="KW-0488">Methylation</keyword>
<keyword id="KW-0602">Photosynthesis</keyword>
<keyword id="KW-0605">Phycobilisome</keyword>
<keyword id="KW-0934">Plastid</keyword>
<keyword id="KW-0793">Thylakoid</keyword>
<keyword id="KW-0813">Transport</keyword>
<comment type="function">
    <text>Light-harvesting photosynthetic bile pigment-protein from the phycobiliprotein complex. Allophycocyanin has a maximum absorption at approximately 650 nanometers.</text>
</comment>
<comment type="subunit">
    <text evidence="1">Heterodimer of an alpha and a beta chain.</text>
</comment>
<comment type="subcellular location">
    <subcellularLocation>
        <location evidence="1">Plastid</location>
        <location evidence="1">Cyanelle thylakoid membrane</location>
        <topology evidence="1">Peripheral membrane protein</topology>
        <orientation evidence="1">Stromal side</orientation>
    </subcellularLocation>
    <text evidence="1">Forms the core of the phycobilisome.</text>
</comment>
<comment type="PTM">
    <text evidence="1">Contains one covalently linked phycocyanobilin chromophore.</text>
</comment>
<comment type="similarity">
    <text evidence="2">Belongs to the phycobiliprotein family.</text>
</comment>
<accession>P48087</accession>
<geneLocation type="cyanelle"/>